<feature type="chain" id="PRO_0000221880" description="Penton protein">
    <location>
        <begin position="1"/>
        <end position="525"/>
    </location>
</feature>
<feature type="region of interest" description="Disordered" evidence="2">
    <location>
        <begin position="1"/>
        <end position="47"/>
    </location>
</feature>
<feature type="compositionally biased region" description="Pro residues" evidence="2">
    <location>
        <begin position="8"/>
        <end position="18"/>
    </location>
</feature>
<feature type="compositionally biased region" description="Low complexity" evidence="2">
    <location>
        <begin position="36"/>
        <end position="47"/>
    </location>
</feature>
<evidence type="ECO:0000255" key="1">
    <source>
        <dbReference type="HAMAP-Rule" id="MF_04052"/>
    </source>
</evidence>
<evidence type="ECO:0000256" key="2">
    <source>
        <dbReference type="SAM" id="MobiDB-lite"/>
    </source>
</evidence>
<dbReference type="EMBL" id="M87008">
    <property type="protein sequence ID" value="AAA42517.1"/>
    <property type="molecule type" value="Genomic_DNA"/>
</dbReference>
<dbReference type="PIR" id="A42546">
    <property type="entry name" value="XZAD10"/>
</dbReference>
<dbReference type="PDB" id="8ROQ">
    <property type="method" value="EM"/>
    <property type="resolution" value="3.40 A"/>
    <property type="chains" value="M=1-525"/>
</dbReference>
<dbReference type="PDBsum" id="8ROQ"/>
<dbReference type="SMR" id="P32538"/>
<dbReference type="GO" id="GO:0042025">
    <property type="term" value="C:host cell nucleus"/>
    <property type="evidence" value="ECO:0007669"/>
    <property type="project" value="UniProtKB-SubCell"/>
</dbReference>
<dbReference type="GO" id="GO:0039623">
    <property type="term" value="C:T=25 icosahedral viral capsid"/>
    <property type="evidence" value="ECO:0007669"/>
    <property type="project" value="UniProtKB-UniRule"/>
</dbReference>
<dbReference type="GO" id="GO:0005198">
    <property type="term" value="F:structural molecule activity"/>
    <property type="evidence" value="ECO:0007669"/>
    <property type="project" value="UniProtKB-UniRule"/>
</dbReference>
<dbReference type="GO" id="GO:0075509">
    <property type="term" value="P:endocytosis involved in viral entry into host cell"/>
    <property type="evidence" value="ECO:0007669"/>
    <property type="project" value="UniProtKB-KW"/>
</dbReference>
<dbReference type="GO" id="GO:0019062">
    <property type="term" value="P:virion attachment to host cell"/>
    <property type="evidence" value="ECO:0007669"/>
    <property type="project" value="UniProtKB-UniRule"/>
</dbReference>
<dbReference type="Gene3D" id="3.90.1620.10">
    <property type="entry name" value="adenovirus 2 penton base, domain 2"/>
    <property type="match status" value="1"/>
</dbReference>
<dbReference type="Gene3D" id="2.60.120.550">
    <property type="entry name" value="Penton protein, domain 1"/>
    <property type="match status" value="1"/>
</dbReference>
<dbReference type="HAMAP" id="MF_04052">
    <property type="entry name" value="ADV_CAPSP"/>
    <property type="match status" value="1"/>
</dbReference>
<dbReference type="InterPro" id="IPR002605">
    <property type="entry name" value="Adeno_Penton_B"/>
</dbReference>
<dbReference type="Pfam" id="PF01686">
    <property type="entry name" value="Adeno_Penton_B"/>
    <property type="match status" value="1"/>
</dbReference>
<organismHost>
    <name type="scientific">Galliformes</name>
    <dbReference type="NCBI Taxonomy" id="8976"/>
</organismHost>
<name>CAPSP_ADEGX</name>
<sequence length="525" mass="57406">MWGLQPPTSIPPPPPPTELTPSTYPAMVNGYPPPAASAQSCSSSGGQSELYMPLQRVMAPTGGRNSIKYRDYTPCRNTTKLFYVDNKASDIDTYNKDANHSNFRTTVIHNQDLDADTAATESIQLDNRSCWGGDLKTAVRTNCPNVSSFFQSNSVRVRMMWKRDPPTSTAPPSAVGSGYSVPGAQYKWYDLTVPEGNYALCELIDLLNEGIVQLYLSEGRQNNVQKSDIGVKFDTRNFGLLRDPVTGLVTPGTYVYKGYHPDIVLLPGCAIDFTYSRLSLLLGIGKREPYSKGFVITYEDLQGGDIPALLDLDSVDVNDADGEVIELDNAAPLLHDSAGVSYNVIYDQVTGKPVTAYRSWMLAYNVPNSQANQTTLLTVPDMAGGIGAMYTSLPDTFIAPTGFKEDNTTNLCPVVGMNLFPTYNKIYYQAASTYVQRLENSCQSATAAFNRFPENEILKQAPPMNVSSVCDNQPAVVQQGVLPVKSSLPGLQRVLITDDQRRPIPYVYKSIATVQPTVLSSATLQ</sequence>
<gene>
    <name evidence="1" type="primary">L2</name>
</gene>
<comment type="function">
    <text evidence="1">Major capsid protein that self-associates to form penton base pentamers, each in the shape of a pentagon, situated at the 12 vertices of the pseudo T=25 capsid. Involved in virus secondary attachment to host cell after initial attachment by the fiber protein, and in endocytosis of virions. As the virus enters the host cell, penton proteins are shed concomitant with virion acidification in the endosome.</text>
</comment>
<comment type="subunit">
    <text evidence="1">Interacts with the fiber protein (via N-terminal tail region). Interacts with the capsid vertex protein; this interaction binds the penton base to neighboring peripentonal hexons.</text>
</comment>
<comment type="subcellular location">
    <subcellularLocation>
        <location evidence="1">Virion</location>
    </subcellularLocation>
    <subcellularLocation>
        <location evidence="1">Host nucleus</location>
    </subcellularLocation>
    <text evidence="1">Located at each vertex of the virion.</text>
</comment>
<comment type="induction">
    <text evidence="1">Expressed in the late phase of the viral replicative cycle.</text>
</comment>
<comment type="miscellaneous">
    <text evidence="1">All late proteins expressed from the major late promoter are produced by alternative splicing and alternative polyadenylation of the same gene giving rise to non-overlapping ORFs. A leader sequence is present in the N-terminus of all these mRNAs and is recognized by the viral shutoff protein to provide expression although conventional translation via ribosome scanning from the cap has been shut off in the host cell.</text>
</comment>
<comment type="similarity">
    <text evidence="1">Belongs to the adenoviridae penton family.</text>
</comment>
<reference key="1">
    <citation type="journal article" date="1992" name="Virology">
        <title>Characterization of the avian adenovirus penton base.</title>
        <authorList>
            <person name="Sheppard M."/>
            <person name="Trist H."/>
        </authorList>
    </citation>
    <scope>NUCLEOTIDE SEQUENCE [GENOMIC DNA]</scope>
</reference>
<protein>
    <recommendedName>
        <fullName evidence="1">Penton protein</fullName>
        <shortName evidence="1">CP-P</shortName>
    </recommendedName>
    <alternativeName>
        <fullName evidence="1">Penton base protein</fullName>
    </alternativeName>
    <alternativeName>
        <fullName evidence="1">Protein III</fullName>
    </alternativeName>
</protein>
<proteinExistence type="evidence at protein level"/>
<organism>
    <name type="scientific">Fowl adenovirus C serotype 10 (strain SA2)</name>
    <name type="common">FAdV-10</name>
    <name type="synonym">Fowl adenovirus 10</name>
    <dbReference type="NCBI Taxonomy" id="10547"/>
    <lineage>
        <taxon>Viruses</taxon>
        <taxon>Varidnaviria</taxon>
        <taxon>Bamfordvirae</taxon>
        <taxon>Preplasmiviricota</taxon>
        <taxon>Tectiliviricetes</taxon>
        <taxon>Rowavirales</taxon>
        <taxon>Adenoviridae</taxon>
        <taxon>Aviadenovirus</taxon>
        <taxon>Fowl aviadenovirus C</taxon>
    </lineage>
</organism>
<accession>P32538</accession>
<keyword id="KW-0002">3D-structure</keyword>
<keyword id="KW-0167">Capsid protein</keyword>
<keyword id="KW-1048">Host nucleus</keyword>
<keyword id="KW-0945">Host-virus interaction</keyword>
<keyword id="KW-0426">Late protein</keyword>
<keyword id="KW-1148">T=25 icosahedral capsid protein</keyword>
<keyword id="KW-1161">Viral attachment to host cell</keyword>
<keyword id="KW-1162">Viral penetration into host cytoplasm</keyword>
<keyword id="KW-0946">Virion</keyword>
<keyword id="KW-1164">Virus endocytosis by host</keyword>
<keyword id="KW-1160">Virus entry into host cell</keyword>